<gene>
    <name type="primary">ybdK</name>
    <name type="ordered locus">SeAg_B0622</name>
</gene>
<comment type="function">
    <text evidence="1">ATP-dependent carboxylate-amine ligase which exhibits weak glutamate--cysteine ligase activity.</text>
</comment>
<comment type="catalytic activity">
    <reaction evidence="1">
        <text>L-cysteine + L-glutamate + ATP = gamma-L-glutamyl-L-cysteine + ADP + phosphate + H(+)</text>
        <dbReference type="Rhea" id="RHEA:13285"/>
        <dbReference type="ChEBI" id="CHEBI:15378"/>
        <dbReference type="ChEBI" id="CHEBI:29985"/>
        <dbReference type="ChEBI" id="CHEBI:30616"/>
        <dbReference type="ChEBI" id="CHEBI:35235"/>
        <dbReference type="ChEBI" id="CHEBI:43474"/>
        <dbReference type="ChEBI" id="CHEBI:58173"/>
        <dbReference type="ChEBI" id="CHEBI:456216"/>
        <dbReference type="EC" id="6.3.2.2"/>
    </reaction>
</comment>
<comment type="subunit">
    <text evidence="1">Homodimer.</text>
</comment>
<comment type="similarity">
    <text evidence="1">Belongs to the glutamate--cysteine ligase type 2 family. YbdK subfamily.</text>
</comment>
<sequence length="372" mass="41671">MALNDFHVSEPYTLGIELEMQVINPPGYDLSQDSSTLIDAVKPQLTAGEIKHDITESMLEMATGVCRDIDQAAAQLSAMQHVILQAASEHHLGICGGGTHPFQKWQRQEVCDNERYQRTLENFGYLIQQATVFGQHVHVGCANGDDAIYLLHGLSHFVPHFIALSAASPYMQGSDTRFACARLNIFSAFPDNGPMPWVSNWQEFAGLFRRLSYTTMIDSIKDLHWDIRPSPAFGTVEVRVMDTPLTLDHAINMAGLIQATAHWLLTERPFKPQEQDYLLYKFNRFQACRYGLEGVLTDVYTGDRRRLADDTLRLLDNVTPSARKLGADSAIDALRLQVKKGGNEAQYMREFIADGGSLIGLVQKHCEIWTGQ</sequence>
<organism>
    <name type="scientific">Salmonella agona (strain SL483)</name>
    <dbReference type="NCBI Taxonomy" id="454166"/>
    <lineage>
        <taxon>Bacteria</taxon>
        <taxon>Pseudomonadati</taxon>
        <taxon>Pseudomonadota</taxon>
        <taxon>Gammaproteobacteria</taxon>
        <taxon>Enterobacterales</taxon>
        <taxon>Enterobacteriaceae</taxon>
        <taxon>Salmonella</taxon>
    </lineage>
</organism>
<proteinExistence type="inferred from homology"/>
<protein>
    <recommendedName>
        <fullName evidence="1">Putative glutamate--cysteine ligase 2</fullName>
        <ecNumber evidence="1">6.3.2.2</ecNumber>
    </recommendedName>
    <alternativeName>
        <fullName evidence="1">Gamma-glutamylcysteine synthetase 2</fullName>
        <shortName evidence="1">GCS 2</shortName>
        <shortName evidence="1">Gamma-GCS 2</shortName>
    </alternativeName>
</protein>
<evidence type="ECO:0000255" key="1">
    <source>
        <dbReference type="HAMAP-Rule" id="MF_01609"/>
    </source>
</evidence>
<name>GCS2_SALA4</name>
<keyword id="KW-0067">ATP-binding</keyword>
<keyword id="KW-0436">Ligase</keyword>
<keyword id="KW-0547">Nucleotide-binding</keyword>
<feature type="chain" id="PRO_1000148227" description="Putative glutamate--cysteine ligase 2">
    <location>
        <begin position="1"/>
        <end position="372"/>
    </location>
</feature>
<reference key="1">
    <citation type="journal article" date="2011" name="J. Bacteriol.">
        <title>Comparative genomics of 28 Salmonella enterica isolates: evidence for CRISPR-mediated adaptive sublineage evolution.</title>
        <authorList>
            <person name="Fricke W.F."/>
            <person name="Mammel M.K."/>
            <person name="McDermott P.F."/>
            <person name="Tartera C."/>
            <person name="White D.G."/>
            <person name="Leclerc J.E."/>
            <person name="Ravel J."/>
            <person name="Cebula T.A."/>
        </authorList>
    </citation>
    <scope>NUCLEOTIDE SEQUENCE [LARGE SCALE GENOMIC DNA]</scope>
    <source>
        <strain>SL483</strain>
    </source>
</reference>
<dbReference type="EC" id="6.3.2.2" evidence="1"/>
<dbReference type="EMBL" id="CP001138">
    <property type="protein sequence ID" value="ACH49509.1"/>
    <property type="molecule type" value="Genomic_DNA"/>
</dbReference>
<dbReference type="RefSeq" id="WP_001196911.1">
    <property type="nucleotide sequence ID" value="NC_011149.1"/>
</dbReference>
<dbReference type="SMR" id="B5EYH4"/>
<dbReference type="KEGG" id="sea:SeAg_B0622"/>
<dbReference type="HOGENOM" id="CLU_044848_1_1_6"/>
<dbReference type="Proteomes" id="UP000008819">
    <property type="component" value="Chromosome"/>
</dbReference>
<dbReference type="GO" id="GO:0005524">
    <property type="term" value="F:ATP binding"/>
    <property type="evidence" value="ECO:0007669"/>
    <property type="project" value="UniProtKB-KW"/>
</dbReference>
<dbReference type="GO" id="GO:0004357">
    <property type="term" value="F:glutamate-cysteine ligase activity"/>
    <property type="evidence" value="ECO:0007669"/>
    <property type="project" value="UniProtKB-EC"/>
</dbReference>
<dbReference type="GO" id="GO:0042398">
    <property type="term" value="P:modified amino acid biosynthetic process"/>
    <property type="evidence" value="ECO:0007669"/>
    <property type="project" value="InterPro"/>
</dbReference>
<dbReference type="FunFam" id="3.30.590.20:FF:000002">
    <property type="entry name" value="Putative glutamate--cysteine ligase 2"/>
    <property type="match status" value="1"/>
</dbReference>
<dbReference type="Gene3D" id="3.30.590.20">
    <property type="match status" value="1"/>
</dbReference>
<dbReference type="HAMAP" id="MF_01609">
    <property type="entry name" value="Glu_cys_ligase_2"/>
    <property type="match status" value="1"/>
</dbReference>
<dbReference type="InterPro" id="IPR050141">
    <property type="entry name" value="GCL_type2/YbdK_subfam"/>
</dbReference>
<dbReference type="InterPro" id="IPR006336">
    <property type="entry name" value="GCS2"/>
</dbReference>
<dbReference type="InterPro" id="IPR014746">
    <property type="entry name" value="Gln_synth/guanido_kin_cat_dom"/>
</dbReference>
<dbReference type="InterPro" id="IPR011793">
    <property type="entry name" value="YbdK"/>
</dbReference>
<dbReference type="NCBIfam" id="TIGR02050">
    <property type="entry name" value="gshA_cyan_rel"/>
    <property type="match status" value="1"/>
</dbReference>
<dbReference type="NCBIfam" id="NF010040">
    <property type="entry name" value="PRK13516.1"/>
    <property type="match status" value="1"/>
</dbReference>
<dbReference type="PANTHER" id="PTHR36510">
    <property type="entry name" value="GLUTAMATE--CYSTEINE LIGASE 2-RELATED"/>
    <property type="match status" value="1"/>
</dbReference>
<dbReference type="PANTHER" id="PTHR36510:SF1">
    <property type="entry name" value="GLUTAMATE--CYSTEINE LIGASE 2-RELATED"/>
    <property type="match status" value="1"/>
</dbReference>
<dbReference type="Pfam" id="PF04107">
    <property type="entry name" value="GCS2"/>
    <property type="match status" value="1"/>
</dbReference>
<dbReference type="SUPFAM" id="SSF55931">
    <property type="entry name" value="Glutamine synthetase/guanido kinase"/>
    <property type="match status" value="1"/>
</dbReference>
<accession>B5EYH4</accession>